<accession>G2TRR7</accession>
<protein>
    <recommendedName>
        <fullName>Putative uncharacterized protein C13G1.16</fullName>
    </recommendedName>
</protein>
<keyword id="KW-1185">Reference proteome</keyword>
<reference key="1">
    <citation type="journal article" date="2002" name="Nature">
        <title>The genome sequence of Schizosaccharomyces pombe.</title>
        <authorList>
            <person name="Wood V."/>
            <person name="Gwilliam R."/>
            <person name="Rajandream M.A."/>
            <person name="Lyne M.H."/>
            <person name="Lyne R."/>
            <person name="Stewart A."/>
            <person name="Sgouros J.G."/>
            <person name="Peat N."/>
            <person name="Hayles J."/>
            <person name="Baker S.G."/>
            <person name="Basham D."/>
            <person name="Bowman S."/>
            <person name="Brooks K."/>
            <person name="Brown D."/>
            <person name="Brown S."/>
            <person name="Chillingworth T."/>
            <person name="Churcher C.M."/>
            <person name="Collins M."/>
            <person name="Connor R."/>
            <person name="Cronin A."/>
            <person name="Davis P."/>
            <person name="Feltwell T."/>
            <person name="Fraser A."/>
            <person name="Gentles S."/>
            <person name="Goble A."/>
            <person name="Hamlin N."/>
            <person name="Harris D.E."/>
            <person name="Hidalgo J."/>
            <person name="Hodgson G."/>
            <person name="Holroyd S."/>
            <person name="Hornsby T."/>
            <person name="Howarth S."/>
            <person name="Huckle E.J."/>
            <person name="Hunt S."/>
            <person name="Jagels K."/>
            <person name="James K.D."/>
            <person name="Jones L."/>
            <person name="Jones M."/>
            <person name="Leather S."/>
            <person name="McDonald S."/>
            <person name="McLean J."/>
            <person name="Mooney P."/>
            <person name="Moule S."/>
            <person name="Mungall K.L."/>
            <person name="Murphy L.D."/>
            <person name="Niblett D."/>
            <person name="Odell C."/>
            <person name="Oliver K."/>
            <person name="O'Neil S."/>
            <person name="Pearson D."/>
            <person name="Quail M.A."/>
            <person name="Rabbinowitsch E."/>
            <person name="Rutherford K.M."/>
            <person name="Rutter S."/>
            <person name="Saunders D."/>
            <person name="Seeger K."/>
            <person name="Sharp S."/>
            <person name="Skelton J."/>
            <person name="Simmonds M.N."/>
            <person name="Squares R."/>
            <person name="Squares S."/>
            <person name="Stevens K."/>
            <person name="Taylor K."/>
            <person name="Taylor R.G."/>
            <person name="Tivey A."/>
            <person name="Walsh S.V."/>
            <person name="Warren T."/>
            <person name="Whitehead S."/>
            <person name="Woodward J.R."/>
            <person name="Volckaert G."/>
            <person name="Aert R."/>
            <person name="Robben J."/>
            <person name="Grymonprez B."/>
            <person name="Weltjens I."/>
            <person name="Vanstreels E."/>
            <person name="Rieger M."/>
            <person name="Schaefer M."/>
            <person name="Mueller-Auer S."/>
            <person name="Gabel C."/>
            <person name="Fuchs M."/>
            <person name="Duesterhoeft A."/>
            <person name="Fritzc C."/>
            <person name="Holzer E."/>
            <person name="Moestl D."/>
            <person name="Hilbert H."/>
            <person name="Borzym K."/>
            <person name="Langer I."/>
            <person name="Beck A."/>
            <person name="Lehrach H."/>
            <person name="Reinhardt R."/>
            <person name="Pohl T.M."/>
            <person name="Eger P."/>
            <person name="Zimmermann W."/>
            <person name="Wedler H."/>
            <person name="Wambutt R."/>
            <person name="Purnelle B."/>
            <person name="Goffeau A."/>
            <person name="Cadieu E."/>
            <person name="Dreano S."/>
            <person name="Gloux S."/>
            <person name="Lelaure V."/>
            <person name="Mottier S."/>
            <person name="Galibert F."/>
            <person name="Aves S.J."/>
            <person name="Xiang Z."/>
            <person name="Hunt C."/>
            <person name="Moore K."/>
            <person name="Hurst S.M."/>
            <person name="Lucas M."/>
            <person name="Rochet M."/>
            <person name="Gaillardin C."/>
            <person name="Tallada V.A."/>
            <person name="Garzon A."/>
            <person name="Thode G."/>
            <person name="Daga R.R."/>
            <person name="Cruzado L."/>
            <person name="Jimenez J."/>
            <person name="Sanchez M."/>
            <person name="del Rey F."/>
            <person name="Benito J."/>
            <person name="Dominguez A."/>
            <person name="Revuelta J.L."/>
            <person name="Moreno S."/>
            <person name="Armstrong J."/>
            <person name="Forsburg S.L."/>
            <person name="Cerutti L."/>
            <person name="Lowe T."/>
            <person name="McCombie W.R."/>
            <person name="Paulsen I."/>
            <person name="Potashkin J."/>
            <person name="Shpakovski G.V."/>
            <person name="Ussery D."/>
            <person name="Barrell B.G."/>
            <person name="Nurse P."/>
        </authorList>
    </citation>
    <scope>NUCLEOTIDE SEQUENCE [LARGE SCALE GENOMIC DNA]</scope>
    <source>
        <strain>972 / ATCC 24843</strain>
    </source>
</reference>
<gene>
    <name type="ORF">SPBC13G1.16</name>
</gene>
<organism>
    <name type="scientific">Schizosaccharomyces pombe (strain 972 / ATCC 24843)</name>
    <name type="common">Fission yeast</name>
    <dbReference type="NCBI Taxonomy" id="284812"/>
    <lineage>
        <taxon>Eukaryota</taxon>
        <taxon>Fungi</taxon>
        <taxon>Dikarya</taxon>
        <taxon>Ascomycota</taxon>
        <taxon>Taphrinomycotina</taxon>
        <taxon>Schizosaccharomycetes</taxon>
        <taxon>Schizosaccharomycetales</taxon>
        <taxon>Schizosaccharomycetaceae</taxon>
        <taxon>Schizosaccharomyces</taxon>
    </lineage>
</organism>
<sequence length="62" mass="7325">MQHNKENHFVEDAKQFQEKAKLYQGNYYTLDGELITIIPSSKEGFRSCKSLYYKKKQPIPGR</sequence>
<feature type="chain" id="PRO_0000416620" description="Putative uncharacterized protein C13G1.16">
    <location>
        <begin position="1"/>
        <end position="62"/>
    </location>
</feature>
<dbReference type="EMBL" id="CU329671">
    <property type="protein sequence ID" value="CCD31383.1"/>
    <property type="molecule type" value="Genomic_DNA"/>
</dbReference>
<dbReference type="RefSeq" id="XP_004001731.1">
    <property type="nucleotide sequence ID" value="XM_004001682.1"/>
</dbReference>
<dbReference type="STRING" id="284812.G2TRR7"/>
<dbReference type="PaxDb" id="4896-SPBC13G1.16.1"/>
<dbReference type="EnsemblFungi" id="SPBC13G1.16.1">
    <property type="protein sequence ID" value="SPBC13G1.16.1:pep"/>
    <property type="gene ID" value="SPBC13G1.16"/>
</dbReference>
<dbReference type="PomBase" id="SPBC13G1.16"/>
<dbReference type="VEuPathDB" id="FungiDB:SPBC13G1.16"/>
<dbReference type="HOGENOM" id="CLU_2923990_0_0_1"/>
<dbReference type="InParanoid" id="G2TRR7"/>
<dbReference type="OMA" id="GNYYTLD"/>
<dbReference type="PRO" id="PR:G2TRR7"/>
<dbReference type="Proteomes" id="UP000002485">
    <property type="component" value="Chromosome II"/>
</dbReference>
<proteinExistence type="predicted"/>
<name>YBBG_SCHPO</name>